<sequence>MRDLIAEVVESYDSARLDAETAELVEKYLARVVLRHVFLEEELDGETEIVLRILKRFLS</sequence>
<dbReference type="EMBL" id="AE000782">
    <property type="protein sequence ID" value="AAB89102.1"/>
    <property type="molecule type" value="Genomic_DNA"/>
</dbReference>
<dbReference type="PIR" id="A69520">
    <property type="entry name" value="A69520"/>
</dbReference>
<dbReference type="RefSeq" id="WP_010879650.1">
    <property type="nucleotide sequence ID" value="NC_000917.1"/>
</dbReference>
<dbReference type="SMR" id="O28121"/>
<dbReference type="STRING" id="224325.AF_2161"/>
<dbReference type="PaxDb" id="224325-AF_2161"/>
<dbReference type="EnsemblBacteria" id="AAB89102">
    <property type="protein sequence ID" value="AAB89102"/>
    <property type="gene ID" value="AF_2161"/>
</dbReference>
<dbReference type="KEGG" id="afu:AF_2161"/>
<dbReference type="HOGENOM" id="CLU_2949070_0_0_2"/>
<dbReference type="Proteomes" id="UP000002199">
    <property type="component" value="Chromosome"/>
</dbReference>
<feature type="chain" id="PRO_0000128106" description="Uncharacterized protein AF_2161">
    <location>
        <begin position="1"/>
        <end position="59"/>
    </location>
</feature>
<organism>
    <name type="scientific">Archaeoglobus fulgidus (strain ATCC 49558 / DSM 4304 / JCM 9628 / NBRC 100126 / VC-16)</name>
    <dbReference type="NCBI Taxonomy" id="224325"/>
    <lineage>
        <taxon>Archaea</taxon>
        <taxon>Methanobacteriati</taxon>
        <taxon>Methanobacteriota</taxon>
        <taxon>Archaeoglobi</taxon>
        <taxon>Archaeoglobales</taxon>
        <taxon>Archaeoglobaceae</taxon>
        <taxon>Archaeoglobus</taxon>
    </lineage>
</organism>
<reference key="1">
    <citation type="journal article" date="1997" name="Nature">
        <title>The complete genome sequence of the hyperthermophilic, sulphate-reducing archaeon Archaeoglobus fulgidus.</title>
        <authorList>
            <person name="Klenk H.-P."/>
            <person name="Clayton R.A."/>
            <person name="Tomb J.-F."/>
            <person name="White O."/>
            <person name="Nelson K.E."/>
            <person name="Ketchum K.A."/>
            <person name="Dodson R.J."/>
            <person name="Gwinn M.L."/>
            <person name="Hickey E.K."/>
            <person name="Peterson J.D."/>
            <person name="Richardson D.L."/>
            <person name="Kerlavage A.R."/>
            <person name="Graham D.E."/>
            <person name="Kyrpides N.C."/>
            <person name="Fleischmann R.D."/>
            <person name="Quackenbush J."/>
            <person name="Lee N.H."/>
            <person name="Sutton G.G."/>
            <person name="Gill S.R."/>
            <person name="Kirkness E.F."/>
            <person name="Dougherty B.A."/>
            <person name="McKenney K."/>
            <person name="Adams M.D."/>
            <person name="Loftus B.J."/>
            <person name="Peterson S.N."/>
            <person name="Reich C.I."/>
            <person name="McNeil L.K."/>
            <person name="Badger J.H."/>
            <person name="Glodek A."/>
            <person name="Zhou L."/>
            <person name="Overbeek R."/>
            <person name="Gocayne J.D."/>
            <person name="Weidman J.F."/>
            <person name="McDonald L.A."/>
            <person name="Utterback T.R."/>
            <person name="Cotton M.D."/>
            <person name="Spriggs T."/>
            <person name="Artiach P."/>
            <person name="Kaine B.P."/>
            <person name="Sykes S.M."/>
            <person name="Sadow P.W."/>
            <person name="D'Andrea K.P."/>
            <person name="Bowman C."/>
            <person name="Fujii C."/>
            <person name="Garland S.A."/>
            <person name="Mason T.M."/>
            <person name="Olsen G.J."/>
            <person name="Fraser C.M."/>
            <person name="Smith H.O."/>
            <person name="Woese C.R."/>
            <person name="Venter J.C."/>
        </authorList>
    </citation>
    <scope>NUCLEOTIDE SEQUENCE [LARGE SCALE GENOMIC DNA]</scope>
    <source>
        <strain>ATCC 49558 / DSM 4304 / JCM 9628 / NBRC 100126 / VC-16</strain>
    </source>
</reference>
<gene>
    <name type="ordered locus">AF_2161</name>
</gene>
<proteinExistence type="predicted"/>
<keyword id="KW-1185">Reference proteome</keyword>
<name>Y2161_ARCFU</name>
<accession>O28121</accession>
<protein>
    <recommendedName>
        <fullName>Uncharacterized protein AF_2161</fullName>
    </recommendedName>
</protein>